<name>RL16_CLOBJ</name>
<evidence type="ECO:0000255" key="1">
    <source>
        <dbReference type="HAMAP-Rule" id="MF_01342"/>
    </source>
</evidence>
<evidence type="ECO:0000305" key="2"/>
<organism>
    <name type="scientific">Clostridium botulinum (strain Kyoto / Type A2)</name>
    <dbReference type="NCBI Taxonomy" id="536232"/>
    <lineage>
        <taxon>Bacteria</taxon>
        <taxon>Bacillati</taxon>
        <taxon>Bacillota</taxon>
        <taxon>Clostridia</taxon>
        <taxon>Eubacteriales</taxon>
        <taxon>Clostridiaceae</taxon>
        <taxon>Clostridium</taxon>
    </lineage>
</organism>
<proteinExistence type="inferred from homology"/>
<feature type="chain" id="PRO_1000166348" description="Large ribosomal subunit protein uL16">
    <location>
        <begin position="1"/>
        <end position="147"/>
    </location>
</feature>
<sequence>MLMPKRVKRRKVQRGRMKGKATRGNFIAYGDFGIQATECGWITSNQIEAARIAINRYVKRGGKVWIKIFPDKPVTEKPAETRMGSGKGSPEYWVAVVKPGRVLFEISGVSETVAREAMRLASHKLPVKTKFVTRRDFEEMGGEVNEG</sequence>
<gene>
    <name evidence="1" type="primary">rplP</name>
    <name type="ordered locus">CLM_3941</name>
</gene>
<accession>C1FMU4</accession>
<dbReference type="EMBL" id="CP001581">
    <property type="protein sequence ID" value="ACO84761.1"/>
    <property type="molecule type" value="Genomic_DNA"/>
</dbReference>
<dbReference type="RefSeq" id="WP_003357619.1">
    <property type="nucleotide sequence ID" value="NC_012563.1"/>
</dbReference>
<dbReference type="SMR" id="C1FMU4"/>
<dbReference type="GeneID" id="92940243"/>
<dbReference type="KEGG" id="cby:CLM_3941"/>
<dbReference type="eggNOG" id="COG0197">
    <property type="taxonomic scope" value="Bacteria"/>
</dbReference>
<dbReference type="HOGENOM" id="CLU_078858_2_1_9"/>
<dbReference type="Proteomes" id="UP000001374">
    <property type="component" value="Chromosome"/>
</dbReference>
<dbReference type="GO" id="GO:0022625">
    <property type="term" value="C:cytosolic large ribosomal subunit"/>
    <property type="evidence" value="ECO:0007669"/>
    <property type="project" value="TreeGrafter"/>
</dbReference>
<dbReference type="GO" id="GO:0019843">
    <property type="term" value="F:rRNA binding"/>
    <property type="evidence" value="ECO:0007669"/>
    <property type="project" value="UniProtKB-UniRule"/>
</dbReference>
<dbReference type="GO" id="GO:0003735">
    <property type="term" value="F:structural constituent of ribosome"/>
    <property type="evidence" value="ECO:0007669"/>
    <property type="project" value="InterPro"/>
</dbReference>
<dbReference type="GO" id="GO:0000049">
    <property type="term" value="F:tRNA binding"/>
    <property type="evidence" value="ECO:0007669"/>
    <property type="project" value="UniProtKB-KW"/>
</dbReference>
<dbReference type="GO" id="GO:0006412">
    <property type="term" value="P:translation"/>
    <property type="evidence" value="ECO:0007669"/>
    <property type="project" value="UniProtKB-UniRule"/>
</dbReference>
<dbReference type="CDD" id="cd01433">
    <property type="entry name" value="Ribosomal_L16_L10e"/>
    <property type="match status" value="1"/>
</dbReference>
<dbReference type="FunFam" id="3.90.1170.10:FF:000001">
    <property type="entry name" value="50S ribosomal protein L16"/>
    <property type="match status" value="1"/>
</dbReference>
<dbReference type="Gene3D" id="3.90.1170.10">
    <property type="entry name" value="Ribosomal protein L10e/L16"/>
    <property type="match status" value="1"/>
</dbReference>
<dbReference type="HAMAP" id="MF_01342">
    <property type="entry name" value="Ribosomal_uL16"/>
    <property type="match status" value="1"/>
</dbReference>
<dbReference type="InterPro" id="IPR047873">
    <property type="entry name" value="Ribosomal_uL16"/>
</dbReference>
<dbReference type="InterPro" id="IPR000114">
    <property type="entry name" value="Ribosomal_uL16_bact-type"/>
</dbReference>
<dbReference type="InterPro" id="IPR020798">
    <property type="entry name" value="Ribosomal_uL16_CS"/>
</dbReference>
<dbReference type="InterPro" id="IPR016180">
    <property type="entry name" value="Ribosomal_uL16_dom"/>
</dbReference>
<dbReference type="InterPro" id="IPR036920">
    <property type="entry name" value="Ribosomal_uL16_sf"/>
</dbReference>
<dbReference type="NCBIfam" id="TIGR01164">
    <property type="entry name" value="rplP_bact"/>
    <property type="match status" value="1"/>
</dbReference>
<dbReference type="PANTHER" id="PTHR12220">
    <property type="entry name" value="50S/60S RIBOSOMAL PROTEIN L16"/>
    <property type="match status" value="1"/>
</dbReference>
<dbReference type="PANTHER" id="PTHR12220:SF13">
    <property type="entry name" value="LARGE RIBOSOMAL SUBUNIT PROTEIN UL16M"/>
    <property type="match status" value="1"/>
</dbReference>
<dbReference type="Pfam" id="PF00252">
    <property type="entry name" value="Ribosomal_L16"/>
    <property type="match status" value="1"/>
</dbReference>
<dbReference type="PRINTS" id="PR00060">
    <property type="entry name" value="RIBOSOMALL16"/>
</dbReference>
<dbReference type="SUPFAM" id="SSF54686">
    <property type="entry name" value="Ribosomal protein L16p/L10e"/>
    <property type="match status" value="1"/>
</dbReference>
<dbReference type="PROSITE" id="PS00586">
    <property type="entry name" value="RIBOSOMAL_L16_1"/>
    <property type="match status" value="1"/>
</dbReference>
<dbReference type="PROSITE" id="PS00701">
    <property type="entry name" value="RIBOSOMAL_L16_2"/>
    <property type="match status" value="1"/>
</dbReference>
<reference key="1">
    <citation type="submission" date="2008-10" db="EMBL/GenBank/DDBJ databases">
        <title>Genome sequence of Clostridium botulinum A2 Kyoto.</title>
        <authorList>
            <person name="Shrivastava S."/>
            <person name="Brinkac L.M."/>
            <person name="Brown J.L."/>
            <person name="Bruce D."/>
            <person name="Detter C.C."/>
            <person name="Johnson E.A."/>
            <person name="Munk C.A."/>
            <person name="Smith L.A."/>
            <person name="Smith T.J."/>
            <person name="Sutton G."/>
            <person name="Brettin T.S."/>
        </authorList>
    </citation>
    <scope>NUCLEOTIDE SEQUENCE [LARGE SCALE GENOMIC DNA]</scope>
    <source>
        <strain>Kyoto / Type A2</strain>
    </source>
</reference>
<protein>
    <recommendedName>
        <fullName evidence="1">Large ribosomal subunit protein uL16</fullName>
    </recommendedName>
    <alternativeName>
        <fullName evidence="2">50S ribosomal protein L16</fullName>
    </alternativeName>
</protein>
<keyword id="KW-0687">Ribonucleoprotein</keyword>
<keyword id="KW-0689">Ribosomal protein</keyword>
<keyword id="KW-0694">RNA-binding</keyword>
<keyword id="KW-0699">rRNA-binding</keyword>
<keyword id="KW-0820">tRNA-binding</keyword>
<comment type="function">
    <text evidence="1">Binds 23S rRNA and is also seen to make contacts with the A and possibly P site tRNAs.</text>
</comment>
<comment type="subunit">
    <text evidence="1">Part of the 50S ribosomal subunit.</text>
</comment>
<comment type="similarity">
    <text evidence="1">Belongs to the universal ribosomal protein uL16 family.</text>
</comment>